<sequence length="469" mass="50154">MRNGTSANGTTGHAPIARRLFGTDGVRGVANVHPMTAEMALQLGRALAYVVRNGSHRHRIVIGKDTRLSGYMLEQAIASGISSMGVDVMLSGPLPTPGIAFLTESMRADAGVVISASHNPYQDNGIKFFSRDGFKLPDAVELQIEQLVLGESGLEEFHALRPTATRIGKAKRIDDAIGRYVVFLKSIFPKDLTLDGLTIVVDCAHGAAYHVAPAVFEELGAKVIALNVKPDGKNINDGCGAVHPESMAKAIQKHRAHLGLALDGDADRVILADEQGRIVDGDAIMALVGRDLIRQKTLAKRTVVATVMSNLGLERALAGAGGRVVRTAVGDRYVVEEMRRSGYNFGGEQSGHLIFLDHVTTGDGVAAALNVLAVMQREGRPLSELARCFEPVPQALVNVAVKERRPLSDLPEVARVIGSVEKALGKDGRVLVRFSGTENKVRVLVEGTDGKRIRAQADEIADELRKALG</sequence>
<protein>
    <recommendedName>
        <fullName evidence="1">Phosphoglucosamine mutase</fullName>
        <ecNumber evidence="1">5.4.2.10</ecNumber>
    </recommendedName>
</protein>
<dbReference type="EC" id="5.4.2.10" evidence="1"/>
<dbReference type="EMBL" id="CP000769">
    <property type="protein sequence ID" value="ABS26536.1"/>
    <property type="molecule type" value="Genomic_DNA"/>
</dbReference>
<dbReference type="RefSeq" id="WP_012097122.1">
    <property type="nucleotide sequence ID" value="NC_009675.1"/>
</dbReference>
<dbReference type="SMR" id="A7HCU0"/>
<dbReference type="STRING" id="404589.Anae109_2334"/>
<dbReference type="KEGG" id="afw:Anae109_2334"/>
<dbReference type="eggNOG" id="COG1109">
    <property type="taxonomic scope" value="Bacteria"/>
</dbReference>
<dbReference type="HOGENOM" id="CLU_016950_7_0_7"/>
<dbReference type="OrthoDB" id="9806956at2"/>
<dbReference type="Proteomes" id="UP000006382">
    <property type="component" value="Chromosome"/>
</dbReference>
<dbReference type="GO" id="GO:0005829">
    <property type="term" value="C:cytosol"/>
    <property type="evidence" value="ECO:0007669"/>
    <property type="project" value="TreeGrafter"/>
</dbReference>
<dbReference type="GO" id="GO:0000287">
    <property type="term" value="F:magnesium ion binding"/>
    <property type="evidence" value="ECO:0007669"/>
    <property type="project" value="UniProtKB-UniRule"/>
</dbReference>
<dbReference type="GO" id="GO:0008966">
    <property type="term" value="F:phosphoglucosamine mutase activity"/>
    <property type="evidence" value="ECO:0007669"/>
    <property type="project" value="UniProtKB-UniRule"/>
</dbReference>
<dbReference type="GO" id="GO:0004615">
    <property type="term" value="F:phosphomannomutase activity"/>
    <property type="evidence" value="ECO:0007669"/>
    <property type="project" value="TreeGrafter"/>
</dbReference>
<dbReference type="GO" id="GO:0005975">
    <property type="term" value="P:carbohydrate metabolic process"/>
    <property type="evidence" value="ECO:0007669"/>
    <property type="project" value="InterPro"/>
</dbReference>
<dbReference type="GO" id="GO:0009252">
    <property type="term" value="P:peptidoglycan biosynthetic process"/>
    <property type="evidence" value="ECO:0007669"/>
    <property type="project" value="TreeGrafter"/>
</dbReference>
<dbReference type="GO" id="GO:0006048">
    <property type="term" value="P:UDP-N-acetylglucosamine biosynthetic process"/>
    <property type="evidence" value="ECO:0007669"/>
    <property type="project" value="TreeGrafter"/>
</dbReference>
<dbReference type="CDD" id="cd05802">
    <property type="entry name" value="GlmM"/>
    <property type="match status" value="1"/>
</dbReference>
<dbReference type="FunFam" id="3.40.120.10:FF:000001">
    <property type="entry name" value="Phosphoglucosamine mutase"/>
    <property type="match status" value="1"/>
</dbReference>
<dbReference type="FunFam" id="3.40.120.10:FF:000002">
    <property type="entry name" value="Phosphoglucosamine mutase"/>
    <property type="match status" value="1"/>
</dbReference>
<dbReference type="Gene3D" id="3.40.120.10">
    <property type="entry name" value="Alpha-D-Glucose-1,6-Bisphosphate, subunit A, domain 3"/>
    <property type="match status" value="3"/>
</dbReference>
<dbReference type="Gene3D" id="3.30.310.50">
    <property type="entry name" value="Alpha-D-phosphohexomutase, C-terminal domain"/>
    <property type="match status" value="1"/>
</dbReference>
<dbReference type="HAMAP" id="MF_01554_B">
    <property type="entry name" value="GlmM_B"/>
    <property type="match status" value="1"/>
</dbReference>
<dbReference type="InterPro" id="IPR005844">
    <property type="entry name" value="A-D-PHexomutase_a/b/a-I"/>
</dbReference>
<dbReference type="InterPro" id="IPR016055">
    <property type="entry name" value="A-D-PHexomutase_a/b/a-I/II/III"/>
</dbReference>
<dbReference type="InterPro" id="IPR005845">
    <property type="entry name" value="A-D-PHexomutase_a/b/a-II"/>
</dbReference>
<dbReference type="InterPro" id="IPR005846">
    <property type="entry name" value="A-D-PHexomutase_a/b/a-III"/>
</dbReference>
<dbReference type="InterPro" id="IPR005843">
    <property type="entry name" value="A-D-PHexomutase_C"/>
</dbReference>
<dbReference type="InterPro" id="IPR036900">
    <property type="entry name" value="A-D-PHexomutase_C_sf"/>
</dbReference>
<dbReference type="InterPro" id="IPR016066">
    <property type="entry name" value="A-D-PHexomutase_CS"/>
</dbReference>
<dbReference type="InterPro" id="IPR005841">
    <property type="entry name" value="Alpha-D-phosphohexomutase_SF"/>
</dbReference>
<dbReference type="InterPro" id="IPR006352">
    <property type="entry name" value="GlmM_bact"/>
</dbReference>
<dbReference type="InterPro" id="IPR050060">
    <property type="entry name" value="Phosphoglucosamine_mutase"/>
</dbReference>
<dbReference type="NCBIfam" id="TIGR01455">
    <property type="entry name" value="glmM"/>
    <property type="match status" value="1"/>
</dbReference>
<dbReference type="NCBIfam" id="NF008139">
    <property type="entry name" value="PRK10887.1"/>
    <property type="match status" value="1"/>
</dbReference>
<dbReference type="PANTHER" id="PTHR42946:SF1">
    <property type="entry name" value="PHOSPHOGLUCOMUTASE (ALPHA-D-GLUCOSE-1,6-BISPHOSPHATE-DEPENDENT)"/>
    <property type="match status" value="1"/>
</dbReference>
<dbReference type="PANTHER" id="PTHR42946">
    <property type="entry name" value="PHOSPHOHEXOSE MUTASE"/>
    <property type="match status" value="1"/>
</dbReference>
<dbReference type="Pfam" id="PF02878">
    <property type="entry name" value="PGM_PMM_I"/>
    <property type="match status" value="1"/>
</dbReference>
<dbReference type="Pfam" id="PF02879">
    <property type="entry name" value="PGM_PMM_II"/>
    <property type="match status" value="1"/>
</dbReference>
<dbReference type="Pfam" id="PF02880">
    <property type="entry name" value="PGM_PMM_III"/>
    <property type="match status" value="1"/>
</dbReference>
<dbReference type="Pfam" id="PF00408">
    <property type="entry name" value="PGM_PMM_IV"/>
    <property type="match status" value="1"/>
</dbReference>
<dbReference type="PRINTS" id="PR00509">
    <property type="entry name" value="PGMPMM"/>
</dbReference>
<dbReference type="SUPFAM" id="SSF55957">
    <property type="entry name" value="Phosphoglucomutase, C-terminal domain"/>
    <property type="match status" value="1"/>
</dbReference>
<dbReference type="SUPFAM" id="SSF53738">
    <property type="entry name" value="Phosphoglucomutase, first 3 domains"/>
    <property type="match status" value="3"/>
</dbReference>
<dbReference type="PROSITE" id="PS00710">
    <property type="entry name" value="PGM_PMM"/>
    <property type="match status" value="1"/>
</dbReference>
<keyword id="KW-0413">Isomerase</keyword>
<keyword id="KW-0460">Magnesium</keyword>
<keyword id="KW-0479">Metal-binding</keyword>
<keyword id="KW-0597">Phosphoprotein</keyword>
<keyword id="KW-1185">Reference proteome</keyword>
<name>GLMM_ANADF</name>
<proteinExistence type="inferred from homology"/>
<evidence type="ECO:0000255" key="1">
    <source>
        <dbReference type="HAMAP-Rule" id="MF_01554"/>
    </source>
</evidence>
<gene>
    <name evidence="1" type="primary">glmM</name>
    <name type="ordered locus">Anae109_2334</name>
</gene>
<feature type="chain" id="PRO_0000343584" description="Phosphoglucosamine mutase">
    <location>
        <begin position="1"/>
        <end position="469"/>
    </location>
</feature>
<feature type="active site" description="Phosphoserine intermediate" evidence="1">
    <location>
        <position position="117"/>
    </location>
</feature>
<feature type="binding site" description="via phosphate group" evidence="1">
    <location>
        <position position="117"/>
    </location>
    <ligand>
        <name>Mg(2+)</name>
        <dbReference type="ChEBI" id="CHEBI:18420"/>
    </ligand>
</feature>
<feature type="binding site" evidence="1">
    <location>
        <position position="263"/>
    </location>
    <ligand>
        <name>Mg(2+)</name>
        <dbReference type="ChEBI" id="CHEBI:18420"/>
    </ligand>
</feature>
<feature type="binding site" evidence="1">
    <location>
        <position position="265"/>
    </location>
    <ligand>
        <name>Mg(2+)</name>
        <dbReference type="ChEBI" id="CHEBI:18420"/>
    </ligand>
</feature>
<feature type="binding site" evidence="1">
    <location>
        <position position="267"/>
    </location>
    <ligand>
        <name>Mg(2+)</name>
        <dbReference type="ChEBI" id="CHEBI:18420"/>
    </ligand>
</feature>
<feature type="modified residue" description="Phosphoserine" evidence="1">
    <location>
        <position position="117"/>
    </location>
</feature>
<organism>
    <name type="scientific">Anaeromyxobacter sp. (strain Fw109-5)</name>
    <dbReference type="NCBI Taxonomy" id="404589"/>
    <lineage>
        <taxon>Bacteria</taxon>
        <taxon>Pseudomonadati</taxon>
        <taxon>Myxococcota</taxon>
        <taxon>Myxococcia</taxon>
        <taxon>Myxococcales</taxon>
        <taxon>Cystobacterineae</taxon>
        <taxon>Anaeromyxobacteraceae</taxon>
        <taxon>Anaeromyxobacter</taxon>
    </lineage>
</organism>
<comment type="function">
    <text evidence="1">Catalyzes the conversion of glucosamine-6-phosphate to glucosamine-1-phosphate.</text>
</comment>
<comment type="catalytic activity">
    <reaction evidence="1">
        <text>alpha-D-glucosamine 1-phosphate = D-glucosamine 6-phosphate</text>
        <dbReference type="Rhea" id="RHEA:23424"/>
        <dbReference type="ChEBI" id="CHEBI:58516"/>
        <dbReference type="ChEBI" id="CHEBI:58725"/>
        <dbReference type="EC" id="5.4.2.10"/>
    </reaction>
</comment>
<comment type="cofactor">
    <cofactor evidence="1">
        <name>Mg(2+)</name>
        <dbReference type="ChEBI" id="CHEBI:18420"/>
    </cofactor>
    <text evidence="1">Binds 1 Mg(2+) ion per subunit.</text>
</comment>
<comment type="PTM">
    <text evidence="1">Activated by phosphorylation.</text>
</comment>
<comment type="similarity">
    <text evidence="1">Belongs to the phosphohexose mutase family.</text>
</comment>
<accession>A7HCU0</accession>
<reference key="1">
    <citation type="journal article" date="2015" name="Genome Announc.">
        <title>Complete genome sequence of Anaeromyxobacter sp. Fw109-5, an anaerobic, metal-reducing bacterium isolated from a contaminated subsurface environment.</title>
        <authorList>
            <person name="Hwang C."/>
            <person name="Copeland A."/>
            <person name="Lucas S."/>
            <person name="Lapidus A."/>
            <person name="Barry K."/>
            <person name="Glavina Del Rio T."/>
            <person name="Dalin E."/>
            <person name="Tice H."/>
            <person name="Pitluck S."/>
            <person name="Sims D."/>
            <person name="Brettin T."/>
            <person name="Bruce D.C."/>
            <person name="Detter J.C."/>
            <person name="Han C.S."/>
            <person name="Schmutz J."/>
            <person name="Larimer F.W."/>
            <person name="Land M.L."/>
            <person name="Hauser L.J."/>
            <person name="Kyrpides N."/>
            <person name="Lykidis A."/>
            <person name="Richardson P."/>
            <person name="Belieav A."/>
            <person name="Sanford R.A."/>
            <person name="Loeffler F.E."/>
            <person name="Fields M.W."/>
        </authorList>
    </citation>
    <scope>NUCLEOTIDE SEQUENCE [LARGE SCALE GENOMIC DNA]</scope>
    <source>
        <strain>Fw109-5</strain>
    </source>
</reference>